<sequence length="1147" mass="127892">MRRHSSGSSEDDDASPVEAPHANSSRFSAKDSRSSAHPTTKLDHNRNADRPPSFSISRRSSSINWRLPESRNGNGTVEKRPSPERTSPSSPLGLIMTANGELRTKEVEKTPETVIPARRPPWRSPWAITFSALVAAIVGIGFLVAVLHSSVTRQLDPKGCRMSYMRPSYAKLNEFDTEHTRLASKYSLYLYREQDIDRDTKVRGVPVLFIPGNAGSYKQVRPIAAEAANYFHNVLQHDESAMNAGTRNLDFFTVDFNEDITAFHGQTLLDQAEYLNEAVRYILSLYLDPRVADRDPDLPDPTSVIVLGHSMGGIVARTMLIMPNFQSHSINTIITMSAPHARPPVSFDSQSVQTYKDINDYWRRAYSQQWANDNPLWHVTLVSIAGGGLDTVVPSDYASVESLVPDTHGFTVFTSTIPNVWTSMDHQAILWCDQFRKVVAQAIYDVVDVHRATQTKPRAERMRVFKKWFLTGMETIAEKAAPRSEPTTLLTVDDNSDSIIAEGERLVLRNLGTAGTVRAHLMPIPPSGSPGMKRFTLLTDTKLDKPGEHGKLEVLFCSVIPSQPSQSWAGFPSQMDLSKGSTGSTRLACRSAAPDVVSLPASTSSTQFPFYLNGEKEITPFSYLEYGVDDIAEHQFVAVVEKTTAPTPGFVVAEFSDYTQSHRTRHISLRSLLTFGMKFHLPAERPMVSEVKVPSLQSSLLAYNLRISHQDCNGDSELFAPLVRQYLAEPYESKYFVNAREATVSLHGVAPYVPPPLTGKLDENGLSFQFWTDPTCSSSIHIELTADFMGSLGKLYMRYRTVFAAFPLFIVALVLRKQFRVYDTTGMFIPFLEGLDLCLRQSIPLMLASLTLLTLSTGIMAPASNASFWHWRNGTSSIMDFQHNDLLIGTEDPLFLFLIPLIAIVCVGVCTVFNYMALTLTHLLGVLASLVTFHPGWIGNEDRKKTTPAAFFSPSPRRRMITTAVLLLLVTTMVPYQFAYLVACLVQLMTTVRAQRIASELRSTANSNFYNYTHSIFILMLWILPINLPTFVVWVHNLAVHWLTPFSSHHNVLSVMPFIVLVETLTTGKMIPRMGSRLKHVTSLLLFGMAVYAAVYGVTYAYTLHYVANFLAFWLAIVHSTSDSWSLAGLTHLYSGDAGIRKRGKEP</sequence>
<reference key="1">
    <citation type="journal article" date="2015" name="Genome Announc.">
        <title>Draft genome sequence of the cellulolytic fungus Chaetomium globosum.</title>
        <authorList>
            <person name="Cuomo C.A."/>
            <person name="Untereiner W.A."/>
            <person name="Ma L.-J."/>
            <person name="Grabherr M."/>
            <person name="Birren B.W."/>
        </authorList>
    </citation>
    <scope>NUCLEOTIDE SEQUENCE [LARGE SCALE GENOMIC DNA]</scope>
    <source>
        <strain>ATCC 6205 / CBS 148.51 / DSM 1962 / NBRC 6347 / NRRL 1970</strain>
    </source>
</reference>
<organism>
    <name type="scientific">Chaetomium globosum (strain ATCC 6205 / CBS 148.51 / DSM 1962 / NBRC 6347 / NRRL 1970)</name>
    <name type="common">Soil fungus</name>
    <dbReference type="NCBI Taxonomy" id="306901"/>
    <lineage>
        <taxon>Eukaryota</taxon>
        <taxon>Fungi</taxon>
        <taxon>Dikarya</taxon>
        <taxon>Ascomycota</taxon>
        <taxon>Pezizomycotina</taxon>
        <taxon>Sordariomycetes</taxon>
        <taxon>Sordariomycetidae</taxon>
        <taxon>Sordariales</taxon>
        <taxon>Chaetomiaceae</taxon>
        <taxon>Chaetomium</taxon>
    </lineage>
</organism>
<protein>
    <recommendedName>
        <fullName>GPI inositol-deacylase</fullName>
        <ecNumber>3.1.-.-</ecNumber>
    </recommendedName>
</protein>
<name>BST1_CHAGB</name>
<gene>
    <name type="primary">BST1</name>
    <name type="ORF">CHGG_04544</name>
</gene>
<feature type="chain" id="PRO_0000277634" description="GPI inositol-deacylase">
    <location>
        <begin position="1"/>
        <end position="1147"/>
    </location>
</feature>
<feature type="transmembrane region" description="Helical" evidence="2">
    <location>
        <begin position="127"/>
        <end position="147"/>
    </location>
</feature>
<feature type="transmembrane region" description="Helical" evidence="2">
    <location>
        <begin position="795"/>
        <end position="815"/>
    </location>
</feature>
<feature type="transmembrane region" description="Helical" evidence="2">
    <location>
        <begin position="843"/>
        <end position="863"/>
    </location>
</feature>
<feature type="transmembrane region" description="Helical" evidence="2">
    <location>
        <begin position="893"/>
        <end position="913"/>
    </location>
</feature>
<feature type="transmembrane region" description="Helical" evidence="2">
    <location>
        <begin position="918"/>
        <end position="938"/>
    </location>
</feature>
<feature type="transmembrane region" description="Helical" evidence="2">
    <location>
        <begin position="965"/>
        <end position="985"/>
    </location>
</feature>
<feature type="transmembrane region" description="Helical" evidence="2">
    <location>
        <begin position="1015"/>
        <end position="1035"/>
    </location>
</feature>
<feature type="transmembrane region" description="Helical" evidence="2">
    <location>
        <begin position="1052"/>
        <end position="1072"/>
    </location>
</feature>
<feature type="transmembrane region" description="Helical" evidence="2">
    <location>
        <begin position="1084"/>
        <end position="1104"/>
    </location>
</feature>
<feature type="region of interest" description="Disordered" evidence="3">
    <location>
        <begin position="1"/>
        <end position="94"/>
    </location>
</feature>
<feature type="compositionally biased region" description="Basic and acidic residues" evidence="3">
    <location>
        <begin position="28"/>
        <end position="49"/>
    </location>
</feature>
<feature type="compositionally biased region" description="Low complexity" evidence="3">
    <location>
        <begin position="50"/>
        <end position="63"/>
    </location>
</feature>
<feature type="active site" evidence="1">
    <location>
        <position position="310"/>
    </location>
</feature>
<feature type="glycosylation site" description="N-linked (GlcNAc...) asparagine" evidence="2">
    <location>
        <position position="23"/>
    </location>
</feature>
<feature type="glycosylation site" description="N-linked (GlcNAc...) asparagine" evidence="2">
    <location>
        <position position="74"/>
    </location>
</feature>
<feature type="glycosylation site" description="N-linked (GlcNAc...) asparagine" evidence="2">
    <location>
        <position position="865"/>
    </location>
</feature>
<feature type="glycosylation site" description="N-linked (GlcNAc...) asparagine" evidence="2">
    <location>
        <position position="873"/>
    </location>
</feature>
<feature type="glycosylation site" description="N-linked (GlcNAc...) asparagine" evidence="2">
    <location>
        <position position="1011"/>
    </location>
</feature>
<proteinExistence type="inferred from homology"/>
<keyword id="KW-0256">Endoplasmic reticulum</keyword>
<keyword id="KW-0325">Glycoprotein</keyword>
<keyword id="KW-0378">Hydrolase</keyword>
<keyword id="KW-0472">Membrane</keyword>
<keyword id="KW-0653">Protein transport</keyword>
<keyword id="KW-1185">Reference proteome</keyword>
<keyword id="KW-0812">Transmembrane</keyword>
<keyword id="KW-1133">Transmembrane helix</keyword>
<keyword id="KW-0813">Transport</keyword>
<dbReference type="EC" id="3.1.-.-"/>
<dbReference type="EMBL" id="CH408032">
    <property type="protein sequence ID" value="EAQ87925.1"/>
    <property type="status" value="ALT_INIT"/>
    <property type="molecule type" value="Genomic_DNA"/>
</dbReference>
<dbReference type="RefSeq" id="XP_001223758.1">
    <property type="nucleotide sequence ID" value="XM_001223757.1"/>
</dbReference>
<dbReference type="SMR" id="Q2H102"/>
<dbReference type="FunCoup" id="Q2H102">
    <property type="interactions" value="37"/>
</dbReference>
<dbReference type="STRING" id="306901.Q2H102"/>
<dbReference type="ESTHER" id="chagb-q2h102">
    <property type="family name" value="PGAP1"/>
</dbReference>
<dbReference type="GlyCosmos" id="Q2H102">
    <property type="glycosylation" value="5 sites, No reported glycans"/>
</dbReference>
<dbReference type="GeneID" id="4392572"/>
<dbReference type="VEuPathDB" id="FungiDB:CHGG_04544"/>
<dbReference type="eggNOG" id="KOG3724">
    <property type="taxonomic scope" value="Eukaryota"/>
</dbReference>
<dbReference type="HOGENOM" id="CLU_006103_1_0_1"/>
<dbReference type="InParanoid" id="Q2H102"/>
<dbReference type="OrthoDB" id="348976at2759"/>
<dbReference type="Proteomes" id="UP000001056">
    <property type="component" value="Unassembled WGS sequence"/>
</dbReference>
<dbReference type="GO" id="GO:0005789">
    <property type="term" value="C:endoplasmic reticulum membrane"/>
    <property type="evidence" value="ECO:0007669"/>
    <property type="project" value="UniProtKB-SubCell"/>
</dbReference>
<dbReference type="GO" id="GO:0050185">
    <property type="term" value="F:phosphatidylinositol deacylase activity"/>
    <property type="evidence" value="ECO:0007669"/>
    <property type="project" value="TreeGrafter"/>
</dbReference>
<dbReference type="GO" id="GO:0006888">
    <property type="term" value="P:endoplasmic reticulum to Golgi vesicle-mediated transport"/>
    <property type="evidence" value="ECO:0007669"/>
    <property type="project" value="TreeGrafter"/>
</dbReference>
<dbReference type="GO" id="GO:0006505">
    <property type="term" value="P:GPI anchor metabolic process"/>
    <property type="evidence" value="ECO:0007669"/>
    <property type="project" value="TreeGrafter"/>
</dbReference>
<dbReference type="GO" id="GO:0015031">
    <property type="term" value="P:protein transport"/>
    <property type="evidence" value="ECO:0007669"/>
    <property type="project" value="UniProtKB-KW"/>
</dbReference>
<dbReference type="FunFam" id="3.40.50.1820:FF:000056">
    <property type="entry name" value="GPI inositol-deacylase"/>
    <property type="match status" value="1"/>
</dbReference>
<dbReference type="Gene3D" id="3.40.50.1820">
    <property type="entry name" value="alpha/beta hydrolase"/>
    <property type="match status" value="1"/>
</dbReference>
<dbReference type="InterPro" id="IPR029058">
    <property type="entry name" value="AB_hydrolase_fold"/>
</dbReference>
<dbReference type="InterPro" id="IPR012908">
    <property type="entry name" value="PGAP1-ab_dom-like"/>
</dbReference>
<dbReference type="InterPro" id="IPR039529">
    <property type="entry name" value="PGAP1/BST1"/>
</dbReference>
<dbReference type="InterPro" id="IPR056824">
    <property type="entry name" value="PGAP1_TMD"/>
</dbReference>
<dbReference type="PANTHER" id="PTHR15495:SF7">
    <property type="entry name" value="GPI INOSITOL-DEACYLASE"/>
    <property type="match status" value="1"/>
</dbReference>
<dbReference type="PANTHER" id="PTHR15495">
    <property type="entry name" value="NEGATIVE REGULATOR OF VESICLE FORMATION-RELATED"/>
    <property type="match status" value="1"/>
</dbReference>
<dbReference type="Pfam" id="PF07819">
    <property type="entry name" value="PGAP1"/>
    <property type="match status" value="1"/>
</dbReference>
<dbReference type="Pfam" id="PF25141">
    <property type="entry name" value="PGAP1_2nd"/>
    <property type="match status" value="1"/>
</dbReference>
<dbReference type="Pfam" id="PF25140">
    <property type="entry name" value="PGAP1_TMD"/>
    <property type="match status" value="1"/>
</dbReference>
<dbReference type="SUPFAM" id="SSF53474">
    <property type="entry name" value="alpha/beta-Hydrolases"/>
    <property type="match status" value="1"/>
</dbReference>
<dbReference type="PROSITE" id="PS00120">
    <property type="entry name" value="LIPASE_SER"/>
    <property type="match status" value="1"/>
</dbReference>
<accession>Q2H102</accession>
<comment type="function">
    <text evidence="1">Involved in inositol deacylation of GPI-anchored proteins which plays important roles in the quality control and ER-associated degradation of GPI-anchored proteins.</text>
</comment>
<comment type="subcellular location">
    <subcellularLocation>
        <location evidence="1">Endoplasmic reticulum membrane</location>
        <topology evidence="1">Multi-pass membrane protein</topology>
    </subcellularLocation>
</comment>
<comment type="similarity">
    <text evidence="4">Belongs to the GPI inositol-deacylase family.</text>
</comment>
<comment type="sequence caution" evidence="4">
    <conflict type="erroneous initiation">
        <sequence resource="EMBL-CDS" id="EAQ87925"/>
    </conflict>
</comment>
<evidence type="ECO:0000250" key="1"/>
<evidence type="ECO:0000255" key="2"/>
<evidence type="ECO:0000256" key="3">
    <source>
        <dbReference type="SAM" id="MobiDB-lite"/>
    </source>
</evidence>
<evidence type="ECO:0000305" key="4"/>